<sequence>MAYRDQPLGELALSIPRASALFRKYDMDYCCGGKQTLARAAARKELDVEVIEAELAKLAEQPIEKDWRSAPLAEIIDHIIVRYHDRHREQLPELILQATKVERVHADKPSVPKGLTKYLTMLHEELSSHMMKEEQILFPMIKQGMGSQAMGPISVMESEHDEAGELLEVIKHTTNNVTPPPEACTTWKAMYNGINELIDDLMEHISLENNVLFPRALAGE</sequence>
<proteinExistence type="inferred from homology"/>
<name>YTFE_ECOLU</name>
<comment type="function">
    <text evidence="1">Di-iron-containing protein involved in the repair of iron-sulfur clusters damaged by oxidative and nitrosative stress conditions.</text>
</comment>
<comment type="subunit">
    <text evidence="1">Homodimer.</text>
</comment>
<comment type="subcellular location">
    <subcellularLocation>
        <location evidence="1">Cytoplasm</location>
    </subcellularLocation>
</comment>
<comment type="similarity">
    <text evidence="1">Belongs to the RIC family. YtfE subfamily.</text>
</comment>
<feature type="chain" id="PRO_1000148177" description="Iron-sulfur cluster repair protein YtfE">
    <location>
        <begin position="1"/>
        <end position="220"/>
    </location>
</feature>
<organism>
    <name type="scientific">Escherichia coli O17:K52:H18 (strain UMN026 / ExPEC)</name>
    <dbReference type="NCBI Taxonomy" id="585056"/>
    <lineage>
        <taxon>Bacteria</taxon>
        <taxon>Pseudomonadati</taxon>
        <taxon>Pseudomonadota</taxon>
        <taxon>Gammaproteobacteria</taxon>
        <taxon>Enterobacterales</taxon>
        <taxon>Enterobacteriaceae</taxon>
        <taxon>Escherichia</taxon>
    </lineage>
</organism>
<evidence type="ECO:0000255" key="1">
    <source>
        <dbReference type="HAMAP-Rule" id="MF_01606"/>
    </source>
</evidence>
<reference key="1">
    <citation type="journal article" date="2009" name="PLoS Genet.">
        <title>Organised genome dynamics in the Escherichia coli species results in highly diverse adaptive paths.</title>
        <authorList>
            <person name="Touchon M."/>
            <person name="Hoede C."/>
            <person name="Tenaillon O."/>
            <person name="Barbe V."/>
            <person name="Baeriswyl S."/>
            <person name="Bidet P."/>
            <person name="Bingen E."/>
            <person name="Bonacorsi S."/>
            <person name="Bouchier C."/>
            <person name="Bouvet O."/>
            <person name="Calteau A."/>
            <person name="Chiapello H."/>
            <person name="Clermont O."/>
            <person name="Cruveiller S."/>
            <person name="Danchin A."/>
            <person name="Diard M."/>
            <person name="Dossat C."/>
            <person name="Karoui M.E."/>
            <person name="Frapy E."/>
            <person name="Garry L."/>
            <person name="Ghigo J.M."/>
            <person name="Gilles A.M."/>
            <person name="Johnson J."/>
            <person name="Le Bouguenec C."/>
            <person name="Lescat M."/>
            <person name="Mangenot S."/>
            <person name="Martinez-Jehanne V."/>
            <person name="Matic I."/>
            <person name="Nassif X."/>
            <person name="Oztas S."/>
            <person name="Petit M.A."/>
            <person name="Pichon C."/>
            <person name="Rouy Z."/>
            <person name="Ruf C.S."/>
            <person name="Schneider D."/>
            <person name="Tourret J."/>
            <person name="Vacherie B."/>
            <person name="Vallenet D."/>
            <person name="Medigue C."/>
            <person name="Rocha E.P.C."/>
            <person name="Denamur E."/>
        </authorList>
    </citation>
    <scope>NUCLEOTIDE SEQUENCE [LARGE SCALE GENOMIC DNA]</scope>
    <source>
        <strain>UMN026 / ExPEC</strain>
    </source>
</reference>
<accession>B7NGE7</accession>
<gene>
    <name evidence="1" type="primary">ytfE</name>
    <name type="ordered locus">ECUMN_4746</name>
</gene>
<keyword id="KW-0963">Cytoplasm</keyword>
<keyword id="KW-0408">Iron</keyword>
<keyword id="KW-0479">Metal-binding</keyword>
<keyword id="KW-0346">Stress response</keyword>
<protein>
    <recommendedName>
        <fullName evidence="1">Iron-sulfur cluster repair protein YtfE</fullName>
    </recommendedName>
</protein>
<dbReference type="EMBL" id="CU928163">
    <property type="protein sequence ID" value="CAR15859.1"/>
    <property type="molecule type" value="Genomic_DNA"/>
</dbReference>
<dbReference type="RefSeq" id="WP_000331457.1">
    <property type="nucleotide sequence ID" value="NC_011751.1"/>
</dbReference>
<dbReference type="RefSeq" id="YP_002415342.1">
    <property type="nucleotide sequence ID" value="NC_011751.1"/>
</dbReference>
<dbReference type="SMR" id="B7NGE7"/>
<dbReference type="STRING" id="585056.ECUMN_4746"/>
<dbReference type="KEGG" id="eum:ECUMN_4746"/>
<dbReference type="PATRIC" id="fig|585056.7.peg.4910"/>
<dbReference type="HOGENOM" id="CLU_076075_2_0_6"/>
<dbReference type="Proteomes" id="UP000007097">
    <property type="component" value="Chromosome"/>
</dbReference>
<dbReference type="GO" id="GO:0005737">
    <property type="term" value="C:cytoplasm"/>
    <property type="evidence" value="ECO:0007669"/>
    <property type="project" value="UniProtKB-SubCell"/>
</dbReference>
<dbReference type="GO" id="GO:0046872">
    <property type="term" value="F:metal ion binding"/>
    <property type="evidence" value="ECO:0007669"/>
    <property type="project" value="UniProtKB-KW"/>
</dbReference>
<dbReference type="GO" id="GO:0030091">
    <property type="term" value="P:protein repair"/>
    <property type="evidence" value="ECO:0007669"/>
    <property type="project" value="UniProtKB-UniRule"/>
</dbReference>
<dbReference type="GO" id="GO:0051409">
    <property type="term" value="P:response to nitrosative stress"/>
    <property type="evidence" value="ECO:0007669"/>
    <property type="project" value="UniProtKB-UniRule"/>
</dbReference>
<dbReference type="GO" id="GO:0006979">
    <property type="term" value="P:response to oxidative stress"/>
    <property type="evidence" value="ECO:0007669"/>
    <property type="project" value="UniProtKB-UniRule"/>
</dbReference>
<dbReference type="CDD" id="cd12108">
    <property type="entry name" value="Hr-like"/>
    <property type="match status" value="1"/>
</dbReference>
<dbReference type="FunFam" id="1.20.120.520:FF:000001">
    <property type="entry name" value="Iron-sulfur cluster repair protein YtfE"/>
    <property type="match status" value="1"/>
</dbReference>
<dbReference type="Gene3D" id="1.20.120.520">
    <property type="entry name" value="nmb1532 protein domain like"/>
    <property type="match status" value="1"/>
</dbReference>
<dbReference type="HAMAP" id="MF_01606">
    <property type="entry name" value="RIC_YtfE"/>
    <property type="match status" value="1"/>
</dbReference>
<dbReference type="InterPro" id="IPR023742">
    <property type="entry name" value="FeS-repair_YftE"/>
</dbReference>
<dbReference type="InterPro" id="IPR012312">
    <property type="entry name" value="Hemerythrin-like"/>
</dbReference>
<dbReference type="InterPro" id="IPR019903">
    <property type="entry name" value="RIC_family"/>
</dbReference>
<dbReference type="NCBIfam" id="TIGR03652">
    <property type="entry name" value="FeS_repair_RIC"/>
    <property type="match status" value="1"/>
</dbReference>
<dbReference type="NCBIfam" id="NF008221">
    <property type="entry name" value="PRK10992.1"/>
    <property type="match status" value="1"/>
</dbReference>
<dbReference type="PANTHER" id="PTHR36438">
    <property type="entry name" value="IRON-SULFUR CLUSTER REPAIR PROTEIN YTFE"/>
    <property type="match status" value="1"/>
</dbReference>
<dbReference type="PANTHER" id="PTHR36438:SF1">
    <property type="entry name" value="IRON-SULFUR CLUSTER REPAIR PROTEIN YTFE"/>
    <property type="match status" value="1"/>
</dbReference>
<dbReference type="Pfam" id="PF01814">
    <property type="entry name" value="Hemerythrin"/>
    <property type="match status" value="1"/>
</dbReference>
<dbReference type="Pfam" id="PF04405">
    <property type="entry name" value="ScdA_N"/>
    <property type="match status" value="1"/>
</dbReference>